<feature type="chain" id="PRO_0000394501" description="Uncharacterized protein C20orf203">
    <location>
        <begin position="1"/>
        <end position="194"/>
    </location>
</feature>
<feature type="region of interest" description="Disordered" evidence="1">
    <location>
        <begin position="62"/>
        <end position="93"/>
    </location>
</feature>
<feature type="sequence conflict" description="In Ref. 1; ADF32072/ADF32073 and 2; BAC03569." evidence="3" ref="1 2">
    <original>G</original>
    <variation>R</variation>
    <location>
        <position position="123"/>
    </location>
</feature>
<dbReference type="EMBL" id="GU931819">
    <property type="protein sequence ID" value="ADF32072.1"/>
    <property type="molecule type" value="mRNA"/>
</dbReference>
<dbReference type="EMBL" id="GU931820">
    <property type="protein sequence ID" value="ADF32073.1"/>
    <property type="molecule type" value="mRNA"/>
</dbReference>
<dbReference type="EMBL" id="AK091025">
    <property type="protein sequence ID" value="BAC03569.1"/>
    <property type="molecule type" value="mRNA"/>
</dbReference>
<dbReference type="EMBL" id="FO393400">
    <property type="status" value="NOT_ANNOTATED_CDS"/>
    <property type="molecule type" value="Genomic_DNA"/>
</dbReference>
<dbReference type="EMBL" id="BC105014">
    <property type="status" value="NOT_ANNOTATED_CDS"/>
    <property type="molecule type" value="mRNA"/>
</dbReference>
<dbReference type="CCDS" id="CCDS13203.1"/>
<dbReference type="RefSeq" id="NP_872390.2">
    <property type="nucleotide sequence ID" value="NM_182584.4"/>
</dbReference>
<dbReference type="RefSeq" id="XP_024307646.1">
    <property type="nucleotide sequence ID" value="XM_024451878.2"/>
</dbReference>
<dbReference type="RefSeq" id="XP_047296087.1">
    <property type="nucleotide sequence ID" value="XM_047440131.1"/>
</dbReference>
<dbReference type="RefSeq" id="XP_054179370.1">
    <property type="nucleotide sequence ID" value="XM_054323395.1"/>
</dbReference>
<dbReference type="RefSeq" id="XP_054179371.1">
    <property type="nucleotide sequence ID" value="XM_054323396.1"/>
</dbReference>
<dbReference type="BioGRID" id="129958">
    <property type="interactions" value="7"/>
</dbReference>
<dbReference type="FunCoup" id="Q8NBC4">
    <property type="interactions" value="2"/>
</dbReference>
<dbReference type="IntAct" id="Q8NBC4">
    <property type="interactions" value="2"/>
</dbReference>
<dbReference type="STRING" id="9606.ENSP00000495424"/>
<dbReference type="iPTMnet" id="Q8NBC4"/>
<dbReference type="BioMuta" id="HGNC:26592"/>
<dbReference type="jPOST" id="Q8NBC4"/>
<dbReference type="ProteomicsDB" id="72757"/>
<dbReference type="Antibodypedia" id="78238">
    <property type="antibodies" value="5 antibodies from 5 providers"/>
</dbReference>
<dbReference type="DNASU" id="284805"/>
<dbReference type="Ensembl" id="ENST00000360785.6">
    <property type="protein sequence ID" value="ENSP00000495162.1"/>
    <property type="gene ID" value="ENSG00000198547.10"/>
</dbReference>
<dbReference type="Ensembl" id="ENST00000608990.6">
    <property type="protein sequence ID" value="ENSP00000495424.1"/>
    <property type="gene ID" value="ENSG00000198547.10"/>
</dbReference>
<dbReference type="GeneID" id="284805"/>
<dbReference type="KEGG" id="hsa:284805"/>
<dbReference type="MANE-Select" id="ENST00000608990.6">
    <property type="protein sequence ID" value="ENSP00000495424.1"/>
    <property type="RefSeq nucleotide sequence ID" value="NM_182584.4"/>
    <property type="RefSeq protein sequence ID" value="NP_872390.2"/>
</dbReference>
<dbReference type="AGR" id="HGNC:26592"/>
<dbReference type="CTD" id="284805"/>
<dbReference type="DisGeNET" id="284805"/>
<dbReference type="GeneCards" id="C20orf203"/>
<dbReference type="HGNC" id="HGNC:26592">
    <property type="gene designation" value="C20orf203"/>
</dbReference>
<dbReference type="HPA" id="ENSG00000198547">
    <property type="expression patterns" value="Low tissue specificity"/>
</dbReference>
<dbReference type="neXtProt" id="NX_Q8NBC4"/>
<dbReference type="OpenTargets" id="ENSG00000198547"/>
<dbReference type="PharmGKB" id="PA165392347"/>
<dbReference type="VEuPathDB" id="HostDB:ENSG00000198547"/>
<dbReference type="GeneTree" id="ENSGT00920000150801"/>
<dbReference type="InParanoid" id="Q8NBC4"/>
<dbReference type="OMA" id="AWPSTWF"/>
<dbReference type="OrthoDB" id="9750609at2759"/>
<dbReference type="PAN-GO" id="Q8NBC4">
    <property type="GO annotations" value="0 GO annotations based on evolutionary models"/>
</dbReference>
<dbReference type="PathwayCommons" id="Q8NBC4"/>
<dbReference type="SignaLink" id="Q8NBC4"/>
<dbReference type="BioGRID-ORCS" id="284805">
    <property type="hits" value="5 hits in 158 CRISPR screens"/>
</dbReference>
<dbReference type="ChiTaRS" id="C20orf203">
    <property type="organism name" value="human"/>
</dbReference>
<dbReference type="GenomeRNAi" id="284805"/>
<dbReference type="Pharos" id="Q8NBC4">
    <property type="development level" value="Tdark"/>
</dbReference>
<dbReference type="PRO" id="PR:Q8NBC4"/>
<dbReference type="Proteomes" id="UP000005640">
    <property type="component" value="Chromosome 20"/>
</dbReference>
<dbReference type="RNAct" id="Q8NBC4">
    <property type="molecule type" value="protein"/>
</dbReference>
<dbReference type="Bgee" id="ENSG00000198547">
    <property type="expression patterns" value="Expressed in male germ line stem cell (sensu Vertebrata) in testis and 84 other cell types or tissues"/>
</dbReference>
<dbReference type="GO" id="GO:0005737">
    <property type="term" value="C:cytoplasm"/>
    <property type="evidence" value="ECO:0007669"/>
    <property type="project" value="UniProtKB-SubCell"/>
</dbReference>
<dbReference type="InterPro" id="IPR040965">
    <property type="entry name" value="DUF5559"/>
</dbReference>
<dbReference type="Pfam" id="PF17714">
    <property type="entry name" value="DUF5559"/>
    <property type="match status" value="1"/>
</dbReference>
<evidence type="ECO:0000256" key="1">
    <source>
        <dbReference type="SAM" id="MobiDB-lite"/>
    </source>
</evidence>
<evidence type="ECO:0000269" key="2">
    <source>
    </source>
</evidence>
<evidence type="ECO:0000305" key="3"/>
<gene>
    <name type="primary">C20orf203</name>
</gene>
<accession>Q8NBC4</accession>
<accession>B8JHY2</accession>
<comment type="subcellular location">
    <subcellularLocation>
        <location evidence="2">Cytoplasm</location>
    </subcellularLocation>
</comment>
<comment type="tissue specificity">
    <text evidence="2">Expressed most abundantly in the brain at protein level. Present in cortex, cerebellum and midbrain. Found in neurons. Elevated expressions detected in Alzheimer brain samples. Also expressed in testis.</text>
</comment>
<comment type="miscellaneous">
    <text>Originated from non-coding DNA sequences (insertion of repeat elements especially Alu). Seems to exist only in human.</text>
</comment>
<proteinExistence type="evidence at transcript level"/>
<keyword id="KW-0963">Cytoplasm</keyword>
<keyword id="KW-1185">Reference proteome</keyword>
<sequence length="194" mass="21159">MFPRPVLNSRAQAILLPQPPNMLDHRQWPPRLASFPFTKTGMLSRATSVLAGLTAHLWDLGGGAGRRTSKAQRVHPQPSHQRQPPPPQHPGPYQERIWVGGEGWGEVGGLRLSKVGRRDREVGRGLRAPAGRGRAMGGMPRMGTVGDFGQALSSLAWTSTCFQDFCLPSLPGKLPAPLISKQQFLSNSSRSLFN</sequence>
<name>CT203_HUMAN</name>
<organism>
    <name type="scientific">Homo sapiens</name>
    <name type="common">Human</name>
    <dbReference type="NCBI Taxonomy" id="9606"/>
    <lineage>
        <taxon>Eukaryota</taxon>
        <taxon>Metazoa</taxon>
        <taxon>Chordata</taxon>
        <taxon>Craniata</taxon>
        <taxon>Vertebrata</taxon>
        <taxon>Euteleostomi</taxon>
        <taxon>Mammalia</taxon>
        <taxon>Eutheria</taxon>
        <taxon>Euarchontoglires</taxon>
        <taxon>Primates</taxon>
        <taxon>Haplorrhini</taxon>
        <taxon>Catarrhini</taxon>
        <taxon>Hominidae</taxon>
        <taxon>Homo</taxon>
    </lineage>
</organism>
<protein>
    <recommendedName>
        <fullName>Uncharacterized protein C20orf203</fullName>
    </recommendedName>
</protein>
<reference key="1">
    <citation type="journal article" date="2010" name="PLoS Comput. Biol.">
        <title>A human-specific de novo protein-coding gene associated with human brain functions.</title>
        <authorList>
            <person name="Li C.Y."/>
            <person name="Zhang Y."/>
            <person name="Wang Z."/>
            <person name="Zhang Y."/>
            <person name="Cao C."/>
            <person name="Zhang P.W."/>
            <person name="Lu S.J."/>
            <person name="Li X.M."/>
            <person name="Yu Q."/>
            <person name="Zheng X."/>
            <person name="Du Q."/>
            <person name="Uhl G.R."/>
            <person name="Liu Q.R."/>
            <person name="Wei L."/>
        </authorList>
    </citation>
    <scope>NUCLEOTIDE SEQUENCE [MRNA]</scope>
    <scope>SUBCELLULAR LOCATION</scope>
    <scope>TISSUE SPECIFICITY</scope>
</reference>
<reference key="2">
    <citation type="journal article" date="2004" name="Nat. Genet.">
        <title>Complete sequencing and characterization of 21,243 full-length human cDNAs.</title>
        <authorList>
            <person name="Ota T."/>
            <person name="Suzuki Y."/>
            <person name="Nishikawa T."/>
            <person name="Otsuki T."/>
            <person name="Sugiyama T."/>
            <person name="Irie R."/>
            <person name="Wakamatsu A."/>
            <person name="Hayashi K."/>
            <person name="Sato H."/>
            <person name="Nagai K."/>
            <person name="Kimura K."/>
            <person name="Makita H."/>
            <person name="Sekine M."/>
            <person name="Obayashi M."/>
            <person name="Nishi T."/>
            <person name="Shibahara T."/>
            <person name="Tanaka T."/>
            <person name="Ishii S."/>
            <person name="Yamamoto J."/>
            <person name="Saito K."/>
            <person name="Kawai Y."/>
            <person name="Isono Y."/>
            <person name="Nakamura Y."/>
            <person name="Nagahari K."/>
            <person name="Murakami K."/>
            <person name="Yasuda T."/>
            <person name="Iwayanagi T."/>
            <person name="Wagatsuma M."/>
            <person name="Shiratori A."/>
            <person name="Sudo H."/>
            <person name="Hosoiri T."/>
            <person name="Kaku Y."/>
            <person name="Kodaira H."/>
            <person name="Kondo H."/>
            <person name="Sugawara M."/>
            <person name="Takahashi M."/>
            <person name="Kanda K."/>
            <person name="Yokoi T."/>
            <person name="Furuya T."/>
            <person name="Kikkawa E."/>
            <person name="Omura Y."/>
            <person name="Abe K."/>
            <person name="Kamihara K."/>
            <person name="Katsuta N."/>
            <person name="Sato K."/>
            <person name="Tanikawa M."/>
            <person name="Yamazaki M."/>
            <person name="Ninomiya K."/>
            <person name="Ishibashi T."/>
            <person name="Yamashita H."/>
            <person name="Murakawa K."/>
            <person name="Fujimori K."/>
            <person name="Tanai H."/>
            <person name="Kimata M."/>
            <person name="Watanabe M."/>
            <person name="Hiraoka S."/>
            <person name="Chiba Y."/>
            <person name="Ishida S."/>
            <person name="Ono Y."/>
            <person name="Takiguchi S."/>
            <person name="Watanabe S."/>
            <person name="Yosida M."/>
            <person name="Hotuta T."/>
            <person name="Kusano J."/>
            <person name="Kanehori K."/>
            <person name="Takahashi-Fujii A."/>
            <person name="Hara H."/>
            <person name="Tanase T.-O."/>
            <person name="Nomura Y."/>
            <person name="Togiya S."/>
            <person name="Komai F."/>
            <person name="Hara R."/>
            <person name="Takeuchi K."/>
            <person name="Arita M."/>
            <person name="Imose N."/>
            <person name="Musashino K."/>
            <person name="Yuuki H."/>
            <person name="Oshima A."/>
            <person name="Sasaki N."/>
            <person name="Aotsuka S."/>
            <person name="Yoshikawa Y."/>
            <person name="Matsunawa H."/>
            <person name="Ichihara T."/>
            <person name="Shiohata N."/>
            <person name="Sano S."/>
            <person name="Moriya S."/>
            <person name="Momiyama H."/>
            <person name="Satoh N."/>
            <person name="Takami S."/>
            <person name="Terashima Y."/>
            <person name="Suzuki O."/>
            <person name="Nakagawa S."/>
            <person name="Senoh A."/>
            <person name="Mizoguchi H."/>
            <person name="Goto Y."/>
            <person name="Shimizu F."/>
            <person name="Wakebe H."/>
            <person name="Hishigaki H."/>
            <person name="Watanabe T."/>
            <person name="Sugiyama A."/>
            <person name="Takemoto M."/>
            <person name="Kawakami B."/>
            <person name="Yamazaki M."/>
            <person name="Watanabe K."/>
            <person name="Kumagai A."/>
            <person name="Itakura S."/>
            <person name="Fukuzumi Y."/>
            <person name="Fujimori Y."/>
            <person name="Komiyama M."/>
            <person name="Tashiro H."/>
            <person name="Tanigami A."/>
            <person name="Fujiwara T."/>
            <person name="Ono T."/>
            <person name="Yamada K."/>
            <person name="Fujii Y."/>
            <person name="Ozaki K."/>
            <person name="Hirao M."/>
            <person name="Ohmori Y."/>
            <person name="Kawabata A."/>
            <person name="Hikiji T."/>
            <person name="Kobatake N."/>
            <person name="Inagaki H."/>
            <person name="Ikema Y."/>
            <person name="Okamoto S."/>
            <person name="Okitani R."/>
            <person name="Kawakami T."/>
            <person name="Noguchi S."/>
            <person name="Itoh T."/>
            <person name="Shigeta K."/>
            <person name="Senba T."/>
            <person name="Matsumura K."/>
            <person name="Nakajima Y."/>
            <person name="Mizuno T."/>
            <person name="Morinaga M."/>
            <person name="Sasaki M."/>
            <person name="Togashi T."/>
            <person name="Oyama M."/>
            <person name="Hata H."/>
            <person name="Watanabe M."/>
            <person name="Komatsu T."/>
            <person name="Mizushima-Sugano J."/>
            <person name="Satoh T."/>
            <person name="Shirai Y."/>
            <person name="Takahashi Y."/>
            <person name="Nakagawa K."/>
            <person name="Okumura K."/>
            <person name="Nagase T."/>
            <person name="Nomura N."/>
            <person name="Kikuchi H."/>
            <person name="Masuho Y."/>
            <person name="Yamashita R."/>
            <person name="Nakai K."/>
            <person name="Yada T."/>
            <person name="Nakamura Y."/>
            <person name="Ohara O."/>
            <person name="Isogai T."/>
            <person name="Sugano S."/>
        </authorList>
    </citation>
    <scope>NUCLEOTIDE SEQUENCE [LARGE SCALE MRNA]</scope>
    <source>
        <tissue>Brain</tissue>
    </source>
</reference>
<reference key="3">
    <citation type="journal article" date="2001" name="Nature">
        <title>The DNA sequence and comparative analysis of human chromosome 20.</title>
        <authorList>
            <person name="Deloukas P."/>
            <person name="Matthews L.H."/>
            <person name="Ashurst J.L."/>
            <person name="Burton J."/>
            <person name="Gilbert J.G.R."/>
            <person name="Jones M."/>
            <person name="Stavrides G."/>
            <person name="Almeida J.P."/>
            <person name="Babbage A.K."/>
            <person name="Bagguley C.L."/>
            <person name="Bailey J."/>
            <person name="Barlow K.F."/>
            <person name="Bates K.N."/>
            <person name="Beard L.M."/>
            <person name="Beare D.M."/>
            <person name="Beasley O.P."/>
            <person name="Bird C.P."/>
            <person name="Blakey S.E."/>
            <person name="Bridgeman A.M."/>
            <person name="Brown A.J."/>
            <person name="Buck D."/>
            <person name="Burrill W.D."/>
            <person name="Butler A.P."/>
            <person name="Carder C."/>
            <person name="Carter N.P."/>
            <person name="Chapman J.C."/>
            <person name="Clamp M."/>
            <person name="Clark G."/>
            <person name="Clark L.N."/>
            <person name="Clark S.Y."/>
            <person name="Clee C.M."/>
            <person name="Clegg S."/>
            <person name="Cobley V.E."/>
            <person name="Collier R.E."/>
            <person name="Connor R.E."/>
            <person name="Corby N.R."/>
            <person name="Coulson A."/>
            <person name="Coville G.J."/>
            <person name="Deadman R."/>
            <person name="Dhami P.D."/>
            <person name="Dunn M."/>
            <person name="Ellington A.G."/>
            <person name="Frankland J.A."/>
            <person name="Fraser A."/>
            <person name="French L."/>
            <person name="Garner P."/>
            <person name="Grafham D.V."/>
            <person name="Griffiths C."/>
            <person name="Griffiths M.N.D."/>
            <person name="Gwilliam R."/>
            <person name="Hall R.E."/>
            <person name="Hammond S."/>
            <person name="Harley J.L."/>
            <person name="Heath P.D."/>
            <person name="Ho S."/>
            <person name="Holden J.L."/>
            <person name="Howden P.J."/>
            <person name="Huckle E."/>
            <person name="Hunt A.R."/>
            <person name="Hunt S.E."/>
            <person name="Jekosch K."/>
            <person name="Johnson C.M."/>
            <person name="Johnson D."/>
            <person name="Kay M.P."/>
            <person name="Kimberley A.M."/>
            <person name="King A."/>
            <person name="Knights A."/>
            <person name="Laird G.K."/>
            <person name="Lawlor S."/>
            <person name="Lehvaeslaiho M.H."/>
            <person name="Leversha M.A."/>
            <person name="Lloyd C."/>
            <person name="Lloyd D.M."/>
            <person name="Lovell J.D."/>
            <person name="Marsh V.L."/>
            <person name="Martin S.L."/>
            <person name="McConnachie L.J."/>
            <person name="McLay K."/>
            <person name="McMurray A.A."/>
            <person name="Milne S.A."/>
            <person name="Mistry D."/>
            <person name="Moore M.J.F."/>
            <person name="Mullikin J.C."/>
            <person name="Nickerson T."/>
            <person name="Oliver K."/>
            <person name="Parker A."/>
            <person name="Patel R."/>
            <person name="Pearce T.A.V."/>
            <person name="Peck A.I."/>
            <person name="Phillimore B.J.C.T."/>
            <person name="Prathalingam S.R."/>
            <person name="Plumb R.W."/>
            <person name="Ramsay H."/>
            <person name="Rice C.M."/>
            <person name="Ross M.T."/>
            <person name="Scott C.E."/>
            <person name="Sehra H.K."/>
            <person name="Shownkeen R."/>
            <person name="Sims S."/>
            <person name="Skuce C.D."/>
            <person name="Smith M.L."/>
            <person name="Soderlund C."/>
            <person name="Steward C.A."/>
            <person name="Sulston J.E."/>
            <person name="Swann R.M."/>
            <person name="Sycamore N."/>
            <person name="Taylor R."/>
            <person name="Tee L."/>
            <person name="Thomas D.W."/>
            <person name="Thorpe A."/>
            <person name="Tracey A."/>
            <person name="Tromans A.C."/>
            <person name="Vaudin M."/>
            <person name="Wall M."/>
            <person name="Wallis J.M."/>
            <person name="Whitehead S.L."/>
            <person name="Whittaker P."/>
            <person name="Willey D.L."/>
            <person name="Williams L."/>
            <person name="Williams S.A."/>
            <person name="Wilming L."/>
            <person name="Wray P.W."/>
            <person name="Hubbard T."/>
            <person name="Durbin R.M."/>
            <person name="Bentley D.R."/>
            <person name="Beck S."/>
            <person name="Rogers J."/>
        </authorList>
    </citation>
    <scope>NUCLEOTIDE SEQUENCE [LARGE SCALE GENOMIC DNA]</scope>
</reference>
<reference key="4">
    <citation type="journal article" date="2004" name="Genome Res.">
        <title>The status, quality, and expansion of the NIH full-length cDNA project: the Mammalian Gene Collection (MGC).</title>
        <authorList>
            <consortium name="The MGC Project Team"/>
        </authorList>
    </citation>
    <scope>NUCLEOTIDE SEQUENCE [LARGE SCALE MRNA]</scope>
</reference>